<comment type="function">
    <text evidence="3">Essential for thiamine biosynthesis. Bifunctional enzyme that catalyzes the phosphorylation of hydroxymethylpyrimidine phosphate (HMP-P) to HMP-PP and condenses 4-methyl-5-(beta-hydroxyethyl)thiazole monophosphate (THZ-P) and 2-methyl-4-amino-5-hydroxymethyl pyrimidine pyrophosphate (HMP-PP) to form thiamine monophosphate (TMP).</text>
</comment>
<comment type="catalytic activity">
    <reaction evidence="3">
        <text>2-[(2R,5Z)-2-carboxy-4-methylthiazol-5(2H)-ylidene]ethyl phosphate + 4-amino-2-methyl-5-(diphosphooxymethyl)pyrimidine + 2 H(+) = thiamine phosphate + CO2 + diphosphate</text>
        <dbReference type="Rhea" id="RHEA:47844"/>
        <dbReference type="ChEBI" id="CHEBI:15378"/>
        <dbReference type="ChEBI" id="CHEBI:16526"/>
        <dbReference type="ChEBI" id="CHEBI:33019"/>
        <dbReference type="ChEBI" id="CHEBI:37575"/>
        <dbReference type="ChEBI" id="CHEBI:57841"/>
        <dbReference type="ChEBI" id="CHEBI:62899"/>
        <dbReference type="EC" id="2.5.1.3"/>
    </reaction>
</comment>
<comment type="catalytic activity">
    <reaction evidence="3">
        <text>2-(2-carboxy-4-methylthiazol-5-yl)ethyl phosphate + 4-amino-2-methyl-5-(diphosphooxymethyl)pyrimidine + 2 H(+) = thiamine phosphate + CO2 + diphosphate</text>
        <dbReference type="Rhea" id="RHEA:47848"/>
        <dbReference type="ChEBI" id="CHEBI:15378"/>
        <dbReference type="ChEBI" id="CHEBI:16526"/>
        <dbReference type="ChEBI" id="CHEBI:33019"/>
        <dbReference type="ChEBI" id="CHEBI:37575"/>
        <dbReference type="ChEBI" id="CHEBI:57841"/>
        <dbReference type="ChEBI" id="CHEBI:62890"/>
        <dbReference type="EC" id="2.5.1.3"/>
    </reaction>
</comment>
<comment type="catalytic activity">
    <reaction evidence="3">
        <text>4-methyl-5-(2-phosphooxyethyl)-thiazole + 4-amino-2-methyl-5-(diphosphooxymethyl)pyrimidine + H(+) = thiamine phosphate + diphosphate</text>
        <dbReference type="Rhea" id="RHEA:22328"/>
        <dbReference type="ChEBI" id="CHEBI:15378"/>
        <dbReference type="ChEBI" id="CHEBI:33019"/>
        <dbReference type="ChEBI" id="CHEBI:37575"/>
        <dbReference type="ChEBI" id="CHEBI:57841"/>
        <dbReference type="ChEBI" id="CHEBI:58296"/>
        <dbReference type="EC" id="2.5.1.3"/>
    </reaction>
</comment>
<comment type="catalytic activity">
    <reaction evidence="2">
        <text>4-amino-5-hydroxymethyl-2-methylpyrimidine + ATP = 4-amino-2-methyl-5-(phosphooxymethyl)pyrimidine + ADP + H(+)</text>
        <dbReference type="Rhea" id="RHEA:23096"/>
        <dbReference type="ChEBI" id="CHEBI:15378"/>
        <dbReference type="ChEBI" id="CHEBI:16892"/>
        <dbReference type="ChEBI" id="CHEBI:30616"/>
        <dbReference type="ChEBI" id="CHEBI:58354"/>
        <dbReference type="ChEBI" id="CHEBI:456216"/>
        <dbReference type="EC" id="2.7.1.49"/>
    </reaction>
</comment>
<comment type="cofactor">
    <cofactor evidence="1">
        <name>Mg(2+)</name>
        <dbReference type="ChEBI" id="CHEBI:18420"/>
    </cofactor>
    <text evidence="1">Binds 1 Mg(2+) ion per subunit.</text>
</comment>
<comment type="pathway">
    <text>Cofactor biosynthesis; thiamine diphosphate biosynthesis; thiamine phosphate from 4-amino-2-methyl-5-diphosphomethylpyrimidine and 4-methyl-5-(2-phosphoethyl)-thiazole: step 1/1.</text>
</comment>
<comment type="pathway">
    <text>Cofactor biosynthesis; thiamine diphosphate biosynthesis; 4-amino-2-methyl-5-diphosphomethylpyrimidine from 5-amino-1-(5-phospho-D-ribosyl)imidazole: step 2/3.</text>
</comment>
<comment type="subcellular location">
    <subcellularLocation>
        <location evidence="1">Plastid</location>
        <location evidence="1">Chloroplast</location>
    </subcellularLocation>
</comment>
<comment type="similarity">
    <text evidence="6">Belongs to the thiamine-phosphate synthase family.</text>
</comment>
<reference key="1">
    <citation type="journal article" date="2005" name="BMC Biol.">
        <title>The sequence of rice chromosomes 11 and 12, rich in disease resistance genes and recent gene duplications.</title>
        <authorList>
            <consortium name="The rice chromosomes 11 and 12 sequencing consortia"/>
        </authorList>
    </citation>
    <scope>NUCLEOTIDE SEQUENCE [LARGE SCALE GENOMIC DNA]</scope>
    <source>
        <strain>cv. Nipponbare</strain>
    </source>
</reference>
<reference key="2">
    <citation type="journal article" date="2005" name="Nature">
        <title>The map-based sequence of the rice genome.</title>
        <authorList>
            <consortium name="International rice genome sequencing project (IRGSP)"/>
        </authorList>
    </citation>
    <scope>NUCLEOTIDE SEQUENCE [LARGE SCALE GENOMIC DNA]</scope>
    <source>
        <strain>cv. Nipponbare</strain>
    </source>
</reference>
<reference key="3">
    <citation type="journal article" date="2008" name="Nucleic Acids Res.">
        <title>The rice annotation project database (RAP-DB): 2008 update.</title>
        <authorList>
            <consortium name="The rice annotation project (RAP)"/>
        </authorList>
    </citation>
    <scope>GENOME REANNOTATION</scope>
    <source>
        <strain>cv. Nipponbare</strain>
    </source>
</reference>
<reference key="4">
    <citation type="journal article" date="2013" name="Rice">
        <title>Improvement of the Oryza sativa Nipponbare reference genome using next generation sequence and optical map data.</title>
        <authorList>
            <person name="Kawahara Y."/>
            <person name="de la Bastide M."/>
            <person name="Hamilton J.P."/>
            <person name="Kanamori H."/>
            <person name="McCombie W.R."/>
            <person name="Ouyang S."/>
            <person name="Schwartz D.C."/>
            <person name="Tanaka T."/>
            <person name="Wu J."/>
            <person name="Zhou S."/>
            <person name="Childs K.L."/>
            <person name="Davidson R.M."/>
            <person name="Lin H."/>
            <person name="Quesada-Ocampo L."/>
            <person name="Vaillancourt B."/>
            <person name="Sakai H."/>
            <person name="Lee S.S."/>
            <person name="Kim J."/>
            <person name="Numa H."/>
            <person name="Itoh T."/>
            <person name="Buell C.R."/>
            <person name="Matsumoto T."/>
        </authorList>
    </citation>
    <scope>GENOME REANNOTATION</scope>
    <source>
        <strain>cv. Nipponbare</strain>
    </source>
</reference>
<reference key="5">
    <citation type="journal article" date="2005" name="PLoS Biol.">
        <title>The genomes of Oryza sativa: a history of duplications.</title>
        <authorList>
            <person name="Yu J."/>
            <person name="Wang J."/>
            <person name="Lin W."/>
            <person name="Li S."/>
            <person name="Li H."/>
            <person name="Zhou J."/>
            <person name="Ni P."/>
            <person name="Dong W."/>
            <person name="Hu S."/>
            <person name="Zeng C."/>
            <person name="Zhang J."/>
            <person name="Zhang Y."/>
            <person name="Li R."/>
            <person name="Xu Z."/>
            <person name="Li S."/>
            <person name="Li X."/>
            <person name="Zheng H."/>
            <person name="Cong L."/>
            <person name="Lin L."/>
            <person name="Yin J."/>
            <person name="Geng J."/>
            <person name="Li G."/>
            <person name="Shi J."/>
            <person name="Liu J."/>
            <person name="Lv H."/>
            <person name="Li J."/>
            <person name="Wang J."/>
            <person name="Deng Y."/>
            <person name="Ran L."/>
            <person name="Shi X."/>
            <person name="Wang X."/>
            <person name="Wu Q."/>
            <person name="Li C."/>
            <person name="Ren X."/>
            <person name="Wang J."/>
            <person name="Wang X."/>
            <person name="Li D."/>
            <person name="Liu D."/>
            <person name="Zhang X."/>
            <person name="Ji Z."/>
            <person name="Zhao W."/>
            <person name="Sun Y."/>
            <person name="Zhang Z."/>
            <person name="Bao J."/>
            <person name="Han Y."/>
            <person name="Dong L."/>
            <person name="Ji J."/>
            <person name="Chen P."/>
            <person name="Wu S."/>
            <person name="Liu J."/>
            <person name="Xiao Y."/>
            <person name="Bu D."/>
            <person name="Tan J."/>
            <person name="Yang L."/>
            <person name="Ye C."/>
            <person name="Zhang J."/>
            <person name="Xu J."/>
            <person name="Zhou Y."/>
            <person name="Yu Y."/>
            <person name="Zhang B."/>
            <person name="Zhuang S."/>
            <person name="Wei H."/>
            <person name="Liu B."/>
            <person name="Lei M."/>
            <person name="Yu H."/>
            <person name="Li Y."/>
            <person name="Xu H."/>
            <person name="Wei S."/>
            <person name="He X."/>
            <person name="Fang L."/>
            <person name="Zhang Z."/>
            <person name="Zhang Y."/>
            <person name="Huang X."/>
            <person name="Su Z."/>
            <person name="Tong W."/>
            <person name="Li J."/>
            <person name="Tong Z."/>
            <person name="Li S."/>
            <person name="Ye J."/>
            <person name="Wang L."/>
            <person name="Fang L."/>
            <person name="Lei T."/>
            <person name="Chen C.-S."/>
            <person name="Chen H.-C."/>
            <person name="Xu Z."/>
            <person name="Li H."/>
            <person name="Huang H."/>
            <person name="Zhang F."/>
            <person name="Xu H."/>
            <person name="Li N."/>
            <person name="Zhao C."/>
            <person name="Li S."/>
            <person name="Dong L."/>
            <person name="Huang Y."/>
            <person name="Li L."/>
            <person name="Xi Y."/>
            <person name="Qi Q."/>
            <person name="Li W."/>
            <person name="Zhang B."/>
            <person name="Hu W."/>
            <person name="Zhang Y."/>
            <person name="Tian X."/>
            <person name="Jiao Y."/>
            <person name="Liang X."/>
            <person name="Jin J."/>
            <person name="Gao L."/>
            <person name="Zheng W."/>
            <person name="Hao B."/>
            <person name="Liu S.-M."/>
            <person name="Wang W."/>
            <person name="Yuan L."/>
            <person name="Cao M."/>
            <person name="McDermott J."/>
            <person name="Samudrala R."/>
            <person name="Wang J."/>
            <person name="Wong G.K.-S."/>
            <person name="Yang H."/>
        </authorList>
    </citation>
    <scope>NUCLEOTIDE SEQUENCE [LARGE SCALE GENOMIC DNA]</scope>
    <source>
        <strain>cv. Nipponbare</strain>
    </source>
</reference>
<reference key="6">
    <citation type="journal article" date="2003" name="Science">
        <title>Collection, mapping, and annotation of over 28,000 cDNA clones from japonica rice.</title>
        <authorList>
            <consortium name="The rice full-length cDNA consortium"/>
        </authorList>
    </citation>
    <scope>NUCLEOTIDE SEQUENCE [LARGE SCALE MRNA]</scope>
    <source>
        <strain>cv. Nipponbare</strain>
    </source>
</reference>
<dbReference type="EC" id="2.5.1.3" evidence="3"/>
<dbReference type="EC" id="2.7.1.49" evidence="2"/>
<dbReference type="EMBL" id="DP000011">
    <property type="protein sequence ID" value="ABA96049.2"/>
    <property type="molecule type" value="Genomic_DNA"/>
</dbReference>
<dbReference type="EMBL" id="AP008218">
    <property type="protein sequence ID" value="BAF29362.2"/>
    <property type="molecule type" value="Genomic_DNA"/>
</dbReference>
<dbReference type="EMBL" id="AP014968">
    <property type="protein sequence ID" value="BAT16214.1"/>
    <property type="molecule type" value="Genomic_DNA"/>
</dbReference>
<dbReference type="EMBL" id="CM000149">
    <property type="protein sequence ID" value="EEE52897.1"/>
    <property type="molecule type" value="Genomic_DNA"/>
</dbReference>
<dbReference type="EMBL" id="AK066087">
    <property type="protein sequence ID" value="BAG89812.1"/>
    <property type="molecule type" value="mRNA"/>
</dbReference>
<dbReference type="RefSeq" id="XP_015618273.1">
    <property type="nucleotide sequence ID" value="XM_015762787.1"/>
</dbReference>
<dbReference type="SMR" id="Q2QWK9"/>
<dbReference type="FunCoup" id="Q2QWK9">
    <property type="interactions" value="567"/>
</dbReference>
<dbReference type="STRING" id="39947.Q2QWK9"/>
<dbReference type="PaxDb" id="39947-Q2QWK9"/>
<dbReference type="EnsemblPlants" id="Os12t0192500-02">
    <property type="protein sequence ID" value="Os12t0192500-02"/>
    <property type="gene ID" value="Os12g0192500"/>
</dbReference>
<dbReference type="Gramene" id="Os12t0192500-02">
    <property type="protein sequence ID" value="Os12t0192500-02"/>
    <property type="gene ID" value="Os12g0192500"/>
</dbReference>
<dbReference type="KEGG" id="dosa:Os12g0192500"/>
<dbReference type="eggNOG" id="KOG2598">
    <property type="taxonomic scope" value="Eukaryota"/>
</dbReference>
<dbReference type="HOGENOM" id="CLU_018272_7_0_1"/>
<dbReference type="InParanoid" id="Q2QWK9"/>
<dbReference type="OMA" id="GHIFPTN"/>
<dbReference type="OrthoDB" id="10028886at2759"/>
<dbReference type="PlantReactome" id="R-OSA-1119629">
    <property type="pathway name" value="Thiamine biosynthesis"/>
</dbReference>
<dbReference type="UniPathway" id="UPA00060">
    <property type="reaction ID" value="UER00137"/>
</dbReference>
<dbReference type="UniPathway" id="UPA00060">
    <property type="reaction ID" value="UER00141"/>
</dbReference>
<dbReference type="Proteomes" id="UP000000763">
    <property type="component" value="Chromosome 12"/>
</dbReference>
<dbReference type="Proteomes" id="UP000007752">
    <property type="component" value="Chromosome 12"/>
</dbReference>
<dbReference type="Proteomes" id="UP000059680">
    <property type="component" value="Chromosome 12"/>
</dbReference>
<dbReference type="ExpressionAtlas" id="Q2QWK9">
    <property type="expression patterns" value="baseline and differential"/>
</dbReference>
<dbReference type="GO" id="GO:0009507">
    <property type="term" value="C:chloroplast"/>
    <property type="evidence" value="ECO:0000318"/>
    <property type="project" value="GO_Central"/>
</dbReference>
<dbReference type="GO" id="GO:0005524">
    <property type="term" value="F:ATP binding"/>
    <property type="evidence" value="ECO:0007669"/>
    <property type="project" value="UniProtKB-KW"/>
</dbReference>
<dbReference type="GO" id="GO:0008902">
    <property type="term" value="F:hydroxymethylpyrimidine kinase activity"/>
    <property type="evidence" value="ECO:0000318"/>
    <property type="project" value="GO_Central"/>
</dbReference>
<dbReference type="GO" id="GO:0046872">
    <property type="term" value="F:metal ion binding"/>
    <property type="evidence" value="ECO:0007669"/>
    <property type="project" value="UniProtKB-KW"/>
</dbReference>
<dbReference type="GO" id="GO:0008972">
    <property type="term" value="F:phosphomethylpyrimidine kinase activity"/>
    <property type="evidence" value="ECO:0000318"/>
    <property type="project" value="GO_Central"/>
</dbReference>
<dbReference type="GO" id="GO:0004789">
    <property type="term" value="F:thiamine-phosphate diphosphorylase activity"/>
    <property type="evidence" value="ECO:0007669"/>
    <property type="project" value="UniProtKB-EC"/>
</dbReference>
<dbReference type="GO" id="GO:0009228">
    <property type="term" value="P:thiamine biosynthetic process"/>
    <property type="evidence" value="ECO:0000318"/>
    <property type="project" value="GO_Central"/>
</dbReference>
<dbReference type="GO" id="GO:0009229">
    <property type="term" value="P:thiamine diphosphate biosynthetic process"/>
    <property type="evidence" value="ECO:0007669"/>
    <property type="project" value="UniProtKB-UniPathway"/>
</dbReference>
<dbReference type="CDD" id="cd01169">
    <property type="entry name" value="HMPP_kinase"/>
    <property type="match status" value="1"/>
</dbReference>
<dbReference type="CDD" id="cd00564">
    <property type="entry name" value="TMP_TenI"/>
    <property type="match status" value="1"/>
</dbReference>
<dbReference type="FunFam" id="3.20.20.70:FF:000104">
    <property type="entry name" value="Thiamine biosynthetic bifunctional enzyme"/>
    <property type="match status" value="1"/>
</dbReference>
<dbReference type="FunFam" id="3.40.1190.20:FF:000040">
    <property type="entry name" value="Thiamine biosynthetic bifunctional enzyme TH1, chloroplastic"/>
    <property type="match status" value="1"/>
</dbReference>
<dbReference type="Gene3D" id="3.40.1190.20">
    <property type="match status" value="1"/>
</dbReference>
<dbReference type="Gene3D" id="3.20.20.70">
    <property type="entry name" value="Aldolase class I"/>
    <property type="match status" value="1"/>
</dbReference>
<dbReference type="HAMAP" id="MF_00097">
    <property type="entry name" value="TMP_synthase"/>
    <property type="match status" value="1"/>
</dbReference>
<dbReference type="InterPro" id="IPR013785">
    <property type="entry name" value="Aldolase_TIM"/>
</dbReference>
<dbReference type="InterPro" id="IPR004399">
    <property type="entry name" value="HMP/HMP-P_kinase_dom"/>
</dbReference>
<dbReference type="InterPro" id="IPR013749">
    <property type="entry name" value="PM/HMP-P_kinase-1"/>
</dbReference>
<dbReference type="InterPro" id="IPR029056">
    <property type="entry name" value="Ribokinase-like"/>
</dbReference>
<dbReference type="InterPro" id="IPR036206">
    <property type="entry name" value="ThiamineP_synth_sf"/>
</dbReference>
<dbReference type="InterPro" id="IPR022998">
    <property type="entry name" value="ThiamineP_synth_TenI"/>
</dbReference>
<dbReference type="InterPro" id="IPR034291">
    <property type="entry name" value="TMP_synthase"/>
</dbReference>
<dbReference type="NCBIfam" id="TIGR00097">
    <property type="entry name" value="HMP-P_kinase"/>
    <property type="match status" value="1"/>
</dbReference>
<dbReference type="NCBIfam" id="TIGR00693">
    <property type="entry name" value="thiE"/>
    <property type="match status" value="1"/>
</dbReference>
<dbReference type="PANTHER" id="PTHR20858:SF17">
    <property type="entry name" value="HYDROXYMETHYLPYRIMIDINE_PHOSPHOMETHYLPYRIMIDINE KINASE THI20-RELATED"/>
    <property type="match status" value="1"/>
</dbReference>
<dbReference type="PANTHER" id="PTHR20858">
    <property type="entry name" value="PHOSPHOMETHYLPYRIMIDINE KINASE"/>
    <property type="match status" value="1"/>
</dbReference>
<dbReference type="Pfam" id="PF08543">
    <property type="entry name" value="Phos_pyr_kin"/>
    <property type="match status" value="1"/>
</dbReference>
<dbReference type="Pfam" id="PF02581">
    <property type="entry name" value="TMP-TENI"/>
    <property type="match status" value="1"/>
</dbReference>
<dbReference type="SUPFAM" id="SSF53613">
    <property type="entry name" value="Ribokinase-like"/>
    <property type="match status" value="1"/>
</dbReference>
<dbReference type="SUPFAM" id="SSF51391">
    <property type="entry name" value="Thiamin phosphate synthase"/>
    <property type="match status" value="1"/>
</dbReference>
<keyword id="KW-0067">ATP-binding</keyword>
<keyword id="KW-0150">Chloroplast</keyword>
<keyword id="KW-0418">Kinase</keyword>
<keyword id="KW-0460">Magnesium</keyword>
<keyword id="KW-0479">Metal-binding</keyword>
<keyword id="KW-0511">Multifunctional enzyme</keyword>
<keyword id="KW-0547">Nucleotide-binding</keyword>
<keyword id="KW-0934">Plastid</keyword>
<keyword id="KW-1185">Reference proteome</keyword>
<keyword id="KW-0784">Thiamine biosynthesis</keyword>
<keyword id="KW-0808">Transferase</keyword>
<keyword id="KW-0809">Transit peptide</keyword>
<name>TPS1_ORYSJ</name>
<proteinExistence type="evidence at transcript level"/>
<protein>
    <recommendedName>
        <fullName>Probable thiamine biosynthetic bifunctional enzyme, chloroplastic</fullName>
    </recommendedName>
    <domain>
        <recommendedName>
            <fullName>Thiamine-phosphate synthase</fullName>
            <shortName>TP synthase</shortName>
            <shortName>TPS</shortName>
            <ecNumber evidence="3">2.5.1.3</ecNumber>
        </recommendedName>
        <alternativeName>
            <fullName>Thiamine-phosphate pyrophosphorylase</fullName>
            <shortName>TMP pyrophosphorylase</shortName>
            <shortName>TMP-PPase</shortName>
        </alternativeName>
    </domain>
    <domain>
        <recommendedName>
            <fullName>Hydroxymethylpyrimidine kinase</fullName>
            <shortName>HMP kinase</shortName>
            <ecNumber evidence="2">2.7.1.49</ecNumber>
        </recommendedName>
    </domain>
</protein>
<feature type="transit peptide" description="Chloroplast" evidence="4">
    <location>
        <begin position="1"/>
        <end position="47"/>
    </location>
</feature>
<feature type="chain" id="PRO_0000420254" description="Probable thiamine biosynthetic bifunctional enzyme, chloroplastic">
    <location>
        <begin position="48"/>
        <end position="548"/>
    </location>
</feature>
<feature type="region of interest" description="Disordered" evidence="5">
    <location>
        <begin position="1"/>
        <end position="40"/>
    </location>
</feature>
<feature type="compositionally biased region" description="Polar residues" evidence="5">
    <location>
        <begin position="1"/>
        <end position="10"/>
    </location>
</feature>
<feature type="compositionally biased region" description="Low complexity" evidence="5">
    <location>
        <begin position="11"/>
        <end position="28"/>
    </location>
</feature>
<feature type="binding site" evidence="1">
    <location>
        <begin position="372"/>
        <end position="376"/>
    </location>
    <ligand>
        <name>4-amino-2-methyl-5-(diphosphooxymethyl)pyrimidine</name>
        <dbReference type="ChEBI" id="CHEBI:57841"/>
    </ligand>
</feature>
<feature type="binding site" evidence="1">
    <location>
        <position position="404"/>
    </location>
    <ligand>
        <name>4-amino-2-methyl-5-(diphosphooxymethyl)pyrimidine</name>
        <dbReference type="ChEBI" id="CHEBI:57841"/>
    </ligand>
</feature>
<feature type="binding site" evidence="1">
    <location>
        <position position="405"/>
    </location>
    <ligand>
        <name>Mg(2+)</name>
        <dbReference type="ChEBI" id="CHEBI:18420"/>
    </ligand>
</feature>
<feature type="binding site" evidence="1">
    <location>
        <position position="424"/>
    </location>
    <ligand>
        <name>Mg(2+)</name>
        <dbReference type="ChEBI" id="CHEBI:18420"/>
    </ligand>
</feature>
<feature type="binding site" evidence="1">
    <location>
        <position position="443"/>
    </location>
    <ligand>
        <name>4-amino-2-methyl-5-(diphosphooxymethyl)pyrimidine</name>
        <dbReference type="ChEBI" id="CHEBI:57841"/>
    </ligand>
</feature>
<feature type="binding site" evidence="1">
    <location>
        <begin position="469"/>
        <end position="471"/>
    </location>
    <ligand>
        <name>2-[(2R,5Z)-2-carboxy-4-methylthiazol-5(2H)-ylidene]ethyl phosphate</name>
        <dbReference type="ChEBI" id="CHEBI:62899"/>
    </ligand>
</feature>
<feature type="binding site" evidence="1">
    <location>
        <position position="472"/>
    </location>
    <ligand>
        <name>4-amino-2-methyl-5-(diphosphooxymethyl)pyrimidine</name>
        <dbReference type="ChEBI" id="CHEBI:57841"/>
    </ligand>
</feature>
<feature type="binding site" evidence="1">
    <location>
        <position position="499"/>
    </location>
    <ligand>
        <name>2-[(2R,5Z)-2-carboxy-4-methylthiazol-5(2H)-ylidene]ethyl phosphate</name>
        <dbReference type="ChEBI" id="CHEBI:62899"/>
    </ligand>
</feature>
<feature type="binding site" evidence="1">
    <location>
        <begin position="522"/>
        <end position="523"/>
    </location>
    <ligand>
        <name>2-[(2R,5Z)-2-carboxy-4-methylthiazol-5(2H)-ylidene]ethyl phosphate</name>
        <dbReference type="ChEBI" id="CHEBI:62899"/>
    </ligand>
</feature>
<gene>
    <name type="ordered locus">Os12g0192500</name>
    <name type="ordered locus">LOC_Os12g09000</name>
    <name type="ORF">OsJ_35490</name>
</gene>
<accession>Q2QWK9</accession>
<accession>A0A0P0Y7Y2</accession>
<accession>Q0IPK3</accession>
<evidence type="ECO:0000250" key="1"/>
<evidence type="ECO:0000250" key="2">
    <source>
        <dbReference type="UniProtKB" id="P30137"/>
    </source>
</evidence>
<evidence type="ECO:0000250" key="3">
    <source>
        <dbReference type="UniProtKB" id="Q5M731"/>
    </source>
</evidence>
<evidence type="ECO:0000255" key="4"/>
<evidence type="ECO:0000256" key="5">
    <source>
        <dbReference type="SAM" id="MobiDB-lite"/>
    </source>
</evidence>
<evidence type="ECO:0000305" key="6"/>
<organism>
    <name type="scientific">Oryza sativa subsp. japonica</name>
    <name type="common">Rice</name>
    <dbReference type="NCBI Taxonomy" id="39947"/>
    <lineage>
        <taxon>Eukaryota</taxon>
        <taxon>Viridiplantae</taxon>
        <taxon>Streptophyta</taxon>
        <taxon>Embryophyta</taxon>
        <taxon>Tracheophyta</taxon>
        <taxon>Spermatophyta</taxon>
        <taxon>Magnoliopsida</taxon>
        <taxon>Liliopsida</taxon>
        <taxon>Poales</taxon>
        <taxon>Poaceae</taxon>
        <taxon>BOP clade</taxon>
        <taxon>Oryzoideae</taxon>
        <taxon>Oryzeae</taxon>
        <taxon>Oryzinae</taxon>
        <taxon>Oryza</taxon>
        <taxon>Oryza sativa</taxon>
    </lineage>
</organism>
<sequence>MAAAPQQSVHPSLPSSTSTLRLLISSSPRRPPPPPPRARRYNRLAASASAAREMPWPHVLTVAGSDSGGGAGIQADIKACAALGAYCSSVVTAVTAQNTAGVQGIHVVPEEFIREQLNSVLSDMSVDVVKTGMLPSIGVVRVLCESLKKFPVKALVVDPVMVSTSGDTLSESSTLSVYRDELFAMADIVTPNVKEASRLLGGVSLRTVSDMRNAAESIYKFGPKHVLVKGGDMLESSDATDVFFDGKEFIELHAHRIKTHNTHGTGCTLASCIASELAKGATMLHAVQVAKNFVESALHHSKDLVVGNGPQGPFDHLFKLKCPPYNVGSQPSFKPDQLFLYAVTDSGMNKKWGRSIKEAVQAAIEGGATIVQLREKDSETREFLEAAKACMEICKSSGVPLLINDRVDIALACNADGVHVGQLDMSAHEVRELLGPGKIIGVSCKTPAQAQQAWNDGADYIGCGGVFPTSTKANNPTLGFDGLKTVCLASKLPVVAIGGINASNAGSVMELGLPNLKGVAVVSALFDRPSVVAETRNMKSILTNTSRT</sequence>